<keyword id="KW-0131">Cell cycle</keyword>
<keyword id="KW-0132">Cell division</keyword>
<keyword id="KW-0963">Cytoplasm</keyword>
<keyword id="KW-0206">Cytoskeleton</keyword>
<keyword id="KW-0493">Microtubule</keyword>
<keyword id="KW-0498">Mitosis</keyword>
<keyword id="KW-0539">Nucleus</keyword>
<keyword id="KW-1185">Reference proteome</keyword>
<keyword id="KW-0677">Repeat</keyword>
<name>STU1_GIBZE</name>
<comment type="function">
    <text evidence="1">Microtubule binding protein that promotes the stabilization of dynamic microtubules. Required for mitotic spindle formation (By similarity).</text>
</comment>
<comment type="subunit">
    <text evidence="1">Interacts with microtubules.</text>
</comment>
<comment type="subcellular location">
    <subcellularLocation>
        <location evidence="1">Cytoplasm</location>
        <location evidence="1">Cytoskeleton</location>
    </subcellularLocation>
    <subcellularLocation>
        <location evidence="1">Nucleus</location>
    </subcellularLocation>
    <subcellularLocation>
        <location evidence="1">Cytoplasm</location>
        <location evidence="1">Cytoskeleton</location>
        <location evidence="1">Spindle</location>
    </subcellularLocation>
</comment>
<comment type="similarity">
    <text evidence="3">Belongs to the CLASP family.</text>
</comment>
<proteinExistence type="inferred from homology"/>
<evidence type="ECO:0000250" key="1"/>
<evidence type="ECO:0000256" key="2">
    <source>
        <dbReference type="SAM" id="MobiDB-lite"/>
    </source>
</evidence>
<evidence type="ECO:0000305" key="3"/>
<dbReference type="EMBL" id="DS231665">
    <property type="protein sequence ID" value="ESU12256.1"/>
    <property type="molecule type" value="Genomic_DNA"/>
</dbReference>
<dbReference type="EMBL" id="HG970334">
    <property type="protein sequence ID" value="CEF86490.1"/>
    <property type="molecule type" value="Genomic_DNA"/>
</dbReference>
<dbReference type="RefSeq" id="XP_011324832.1">
    <property type="nucleotide sequence ID" value="XM_011326530.1"/>
</dbReference>
<dbReference type="STRING" id="229533.Q4I9B7"/>
<dbReference type="GeneID" id="23553329"/>
<dbReference type="KEGG" id="fgr:FGSG_06191"/>
<dbReference type="VEuPathDB" id="FungiDB:FGRAMPH1_01G19717"/>
<dbReference type="eggNOG" id="ENOG502QT5T">
    <property type="taxonomic scope" value="Eukaryota"/>
</dbReference>
<dbReference type="HOGENOM" id="CLU_004060_0_0_1"/>
<dbReference type="InParanoid" id="Q4I9B7"/>
<dbReference type="OrthoDB" id="109459at110618"/>
<dbReference type="Proteomes" id="UP000070720">
    <property type="component" value="Chromosome 3"/>
</dbReference>
<dbReference type="GO" id="GO:0005881">
    <property type="term" value="C:cytoplasmic microtubule"/>
    <property type="evidence" value="ECO:0007669"/>
    <property type="project" value="TreeGrafter"/>
</dbReference>
<dbReference type="GO" id="GO:0005815">
    <property type="term" value="C:microtubule organizing center"/>
    <property type="evidence" value="ECO:0007669"/>
    <property type="project" value="TreeGrafter"/>
</dbReference>
<dbReference type="GO" id="GO:1990023">
    <property type="term" value="C:mitotic spindle midzone"/>
    <property type="evidence" value="ECO:0007669"/>
    <property type="project" value="TreeGrafter"/>
</dbReference>
<dbReference type="GO" id="GO:0005634">
    <property type="term" value="C:nucleus"/>
    <property type="evidence" value="ECO:0007669"/>
    <property type="project" value="UniProtKB-SubCell"/>
</dbReference>
<dbReference type="GO" id="GO:0005876">
    <property type="term" value="C:spindle microtubule"/>
    <property type="evidence" value="ECO:0007669"/>
    <property type="project" value="TreeGrafter"/>
</dbReference>
<dbReference type="GO" id="GO:0008017">
    <property type="term" value="F:microtubule binding"/>
    <property type="evidence" value="ECO:0007669"/>
    <property type="project" value="TreeGrafter"/>
</dbReference>
<dbReference type="GO" id="GO:0060172">
    <property type="term" value="P:astral microtubule depolymerization"/>
    <property type="evidence" value="ECO:0007669"/>
    <property type="project" value="TreeGrafter"/>
</dbReference>
<dbReference type="GO" id="GO:0051301">
    <property type="term" value="P:cell division"/>
    <property type="evidence" value="ECO:0007669"/>
    <property type="project" value="UniProtKB-KW"/>
</dbReference>
<dbReference type="GO" id="GO:0090307">
    <property type="term" value="P:mitotic spindle assembly"/>
    <property type="evidence" value="ECO:0007669"/>
    <property type="project" value="TreeGrafter"/>
</dbReference>
<dbReference type="Gene3D" id="1.25.10.10">
    <property type="entry name" value="Leucine-rich Repeat Variant"/>
    <property type="match status" value="3"/>
</dbReference>
<dbReference type="InterPro" id="IPR011989">
    <property type="entry name" value="ARM-like"/>
</dbReference>
<dbReference type="InterPro" id="IPR016024">
    <property type="entry name" value="ARM-type_fold"/>
</dbReference>
<dbReference type="InterPro" id="IPR024395">
    <property type="entry name" value="CLASP_N_dom"/>
</dbReference>
<dbReference type="InterPro" id="IPR034085">
    <property type="entry name" value="TOG"/>
</dbReference>
<dbReference type="PANTHER" id="PTHR21567">
    <property type="entry name" value="CLASP"/>
    <property type="match status" value="1"/>
</dbReference>
<dbReference type="PANTHER" id="PTHR21567:SF9">
    <property type="entry name" value="CLIP-ASSOCIATING PROTEIN"/>
    <property type="match status" value="1"/>
</dbReference>
<dbReference type="Pfam" id="PF12348">
    <property type="entry name" value="CLASP_N"/>
    <property type="match status" value="2"/>
</dbReference>
<dbReference type="SMART" id="SM01349">
    <property type="entry name" value="TOG"/>
    <property type="match status" value="3"/>
</dbReference>
<dbReference type="SUPFAM" id="SSF48371">
    <property type="entry name" value="ARM repeat"/>
    <property type="match status" value="1"/>
</dbReference>
<reference key="1">
    <citation type="journal article" date="2007" name="Science">
        <title>The Fusarium graminearum genome reveals a link between localized polymorphism and pathogen specialization.</title>
        <authorList>
            <person name="Cuomo C.A."/>
            <person name="Gueldener U."/>
            <person name="Xu J.-R."/>
            <person name="Trail F."/>
            <person name="Turgeon B.G."/>
            <person name="Di Pietro A."/>
            <person name="Walton J.D."/>
            <person name="Ma L.-J."/>
            <person name="Baker S.E."/>
            <person name="Rep M."/>
            <person name="Adam G."/>
            <person name="Antoniw J."/>
            <person name="Baldwin T."/>
            <person name="Calvo S.E."/>
            <person name="Chang Y.-L."/>
            <person name="DeCaprio D."/>
            <person name="Gale L.R."/>
            <person name="Gnerre S."/>
            <person name="Goswami R.S."/>
            <person name="Hammond-Kosack K."/>
            <person name="Harris L.J."/>
            <person name="Hilburn K."/>
            <person name="Kennell J.C."/>
            <person name="Kroken S."/>
            <person name="Magnuson J.K."/>
            <person name="Mannhaupt G."/>
            <person name="Mauceli E.W."/>
            <person name="Mewes H.-W."/>
            <person name="Mitterbauer R."/>
            <person name="Muehlbauer G."/>
            <person name="Muensterkoetter M."/>
            <person name="Nelson D."/>
            <person name="O'Donnell K."/>
            <person name="Ouellet T."/>
            <person name="Qi W."/>
            <person name="Quesneville H."/>
            <person name="Roncero M.I.G."/>
            <person name="Seong K.-Y."/>
            <person name="Tetko I.V."/>
            <person name="Urban M."/>
            <person name="Waalwijk C."/>
            <person name="Ward T.J."/>
            <person name="Yao J."/>
            <person name="Birren B.W."/>
            <person name="Kistler H.C."/>
        </authorList>
    </citation>
    <scope>NUCLEOTIDE SEQUENCE [LARGE SCALE GENOMIC DNA]</scope>
    <source>
        <strain>ATCC MYA-4620 / CBS 123657 / FGSC 9075 / NRRL 31084 / PH-1</strain>
    </source>
</reference>
<reference key="2">
    <citation type="journal article" date="2010" name="Nature">
        <title>Comparative genomics reveals mobile pathogenicity chromosomes in Fusarium.</title>
        <authorList>
            <person name="Ma L.-J."/>
            <person name="van der Does H.C."/>
            <person name="Borkovich K.A."/>
            <person name="Coleman J.J."/>
            <person name="Daboussi M.-J."/>
            <person name="Di Pietro A."/>
            <person name="Dufresne M."/>
            <person name="Freitag M."/>
            <person name="Grabherr M."/>
            <person name="Henrissat B."/>
            <person name="Houterman P.M."/>
            <person name="Kang S."/>
            <person name="Shim W.-B."/>
            <person name="Woloshuk C."/>
            <person name="Xie X."/>
            <person name="Xu J.-R."/>
            <person name="Antoniw J."/>
            <person name="Baker S.E."/>
            <person name="Bluhm B.H."/>
            <person name="Breakspear A."/>
            <person name="Brown D.W."/>
            <person name="Butchko R.A.E."/>
            <person name="Chapman S."/>
            <person name="Coulson R."/>
            <person name="Coutinho P.M."/>
            <person name="Danchin E.G.J."/>
            <person name="Diener A."/>
            <person name="Gale L.R."/>
            <person name="Gardiner D.M."/>
            <person name="Goff S."/>
            <person name="Hammond-Kosack K.E."/>
            <person name="Hilburn K."/>
            <person name="Hua-Van A."/>
            <person name="Jonkers W."/>
            <person name="Kazan K."/>
            <person name="Kodira C.D."/>
            <person name="Koehrsen M."/>
            <person name="Kumar L."/>
            <person name="Lee Y.-H."/>
            <person name="Li L."/>
            <person name="Manners J.M."/>
            <person name="Miranda-Saavedra D."/>
            <person name="Mukherjee M."/>
            <person name="Park G."/>
            <person name="Park J."/>
            <person name="Park S.-Y."/>
            <person name="Proctor R.H."/>
            <person name="Regev A."/>
            <person name="Ruiz-Roldan M.C."/>
            <person name="Sain D."/>
            <person name="Sakthikumar S."/>
            <person name="Sykes S."/>
            <person name="Schwartz D.C."/>
            <person name="Turgeon B.G."/>
            <person name="Wapinski I."/>
            <person name="Yoder O."/>
            <person name="Young S."/>
            <person name="Zeng Q."/>
            <person name="Zhou S."/>
            <person name="Galagan J."/>
            <person name="Cuomo C.A."/>
            <person name="Kistler H.C."/>
            <person name="Rep M."/>
        </authorList>
    </citation>
    <scope>GENOME REANNOTATION</scope>
    <source>
        <strain>ATCC MYA-4620 / CBS 123657 / FGSC 9075 / NRRL 31084 / PH-1</strain>
    </source>
</reference>
<reference key="3">
    <citation type="journal article" date="2015" name="BMC Genomics">
        <title>The completed genome sequence of the pathogenic ascomycete fungus Fusarium graminearum.</title>
        <authorList>
            <person name="King R."/>
            <person name="Urban M."/>
            <person name="Hammond-Kosack M.C.U."/>
            <person name="Hassani-Pak K."/>
            <person name="Hammond-Kosack K.E."/>
        </authorList>
    </citation>
    <scope>NUCLEOTIDE SEQUENCE [LARGE SCALE GENOMIC DNA]</scope>
    <source>
        <strain>ATCC MYA-4620 / CBS 123657 / FGSC 9075 / NRRL 31084 / PH-1</strain>
    </source>
</reference>
<sequence>MADTKLTDQQVADLNTILRSDSPLDAKVQYVTIIKSGIKQHNVPESSVAQLFEGLRAATTSQHAALVNAGFTALNHLLTRLSRQDPKLLSKEAARTLPLVVDKLGDQKDKFRSLASHSLVTLFSVAPADVEKYVRNTAMVGKNPRAKETSMHWLLQMHNENGLPFRTYVPVLMELLEDADGMVRDAAKNTVIELFRSAPNAAKSDLKRQLKTFKVRPAIEQAIVKELIPTSSRPETPAAPAEPTPEPAPRKTFSASTSSAAERPITPGIDTKPEVLEPLYVNTNRELDDMIKEMAWFFEGKETEHNWLKRENSVHKLRRLIAGNVTDFSDTFLAGVKSILDGIIKVITSLRTSLCKEGCGLIQEIAYTFGPAMDPLIEQLMQCFVKLSAGTKKISSQLANVTVNTILSQVTYTPRLMQHIWFACQDKNVAPRTYATEWLKTILKKEGHHKHHLEHTGGVDIVEKCLKKGLADANPAVREKTRSTFWVFWGIWPAKADAIMADLDGTAQKLLNKDPSNPNSAKAAESVARPGLGLSKSTMGTSKPSSIREAMMAQRKANAAKNLPARPGSAMAQLSPEKITTTTSSASSKSSGARSRPETGGMSGAPMRPSRKRPEMAARPATAGPYSVRDMDPGSPESVRSKTPKPRETTPKRTVPRTRPGHASHASESSLASPSSVRTGQKSAASPRASPTKLKQSQSTMLSMSSPSRADEDFTMLVPSMANFRTSQRPAPPPQRAASVPPEAPEELSTLVTEIAPQNIPQAAAEPTSQPTLEPELEPQPEPEATPTPVVDPVAEAVDQTMDETVKPEEPVHIIPEPVIEPTPEPSASMQADQAPAASAPTLQVYEDPFTDEQTNSKPTFNLPVLEDKPVNADTASLPSVHAQSPVTQNIEAPDRAKQSLRLLESGIKRIKAKTLDVHGFRKLQSLLRDSKGIFADDKFEALLIGLFQYLEDPLSGTSPEKAQDIKAQILATIRLLLKKERDNFQPHVSRGLESLLETRSAYDIRAHIVSGVEVLADELVTIGDGSEIVVVLTRRLQNVDSSTTEGSRILSTGMHVLRTMLDKRPNFMPTGTELGQLAALAGRCLASADSGVRMDAVQLCVALHSRVGEQTFWDALKDVQDDPKSLITYYIVKRQREQAPTIAA</sequence>
<organism>
    <name type="scientific">Gibberella zeae (strain ATCC MYA-4620 / CBS 123657 / FGSC 9075 / NRRL 31084 / PH-1)</name>
    <name type="common">Wheat head blight fungus</name>
    <name type="synonym">Fusarium graminearum</name>
    <dbReference type="NCBI Taxonomy" id="229533"/>
    <lineage>
        <taxon>Eukaryota</taxon>
        <taxon>Fungi</taxon>
        <taxon>Dikarya</taxon>
        <taxon>Ascomycota</taxon>
        <taxon>Pezizomycotina</taxon>
        <taxon>Sordariomycetes</taxon>
        <taxon>Hypocreomycetidae</taxon>
        <taxon>Hypocreales</taxon>
        <taxon>Nectriaceae</taxon>
        <taxon>Fusarium</taxon>
    </lineage>
</organism>
<gene>
    <name type="primary">STU1</name>
    <name type="ORF">FGRRES_06191</name>
    <name type="ORF">FGSG_06191</name>
</gene>
<protein>
    <recommendedName>
        <fullName>Protein STU1</fullName>
    </recommendedName>
</protein>
<accession>Q4I9B7</accession>
<accession>A0A098DXA6</accession>
<accession>A0A0E0SJ77</accession>
<accession>V6RCY4</accession>
<feature type="chain" id="PRO_0000272290" description="Protein STU1">
    <location>
        <begin position="1"/>
        <end position="1145"/>
    </location>
</feature>
<feature type="repeat" description="HEAT 1">
    <location>
        <begin position="96"/>
        <end position="134"/>
    </location>
</feature>
<feature type="repeat" description="HEAT 2">
    <location>
        <begin position="168"/>
        <end position="206"/>
    </location>
</feature>
<feature type="region of interest" description="Disordered" evidence="2">
    <location>
        <begin position="226"/>
        <end position="271"/>
    </location>
</feature>
<feature type="region of interest" description="Disordered" evidence="2">
    <location>
        <begin position="510"/>
        <end position="793"/>
    </location>
</feature>
<feature type="region of interest" description="Disordered" evidence="2">
    <location>
        <begin position="816"/>
        <end position="839"/>
    </location>
</feature>
<feature type="compositionally biased region" description="Low complexity" evidence="2">
    <location>
        <begin position="229"/>
        <end position="239"/>
    </location>
</feature>
<feature type="compositionally biased region" description="Polar residues" evidence="2">
    <location>
        <begin position="535"/>
        <end position="545"/>
    </location>
</feature>
<feature type="compositionally biased region" description="Low complexity" evidence="2">
    <location>
        <begin position="580"/>
        <end position="594"/>
    </location>
</feature>
<feature type="compositionally biased region" description="Low complexity" evidence="2">
    <location>
        <begin position="663"/>
        <end position="676"/>
    </location>
</feature>
<feature type="compositionally biased region" description="Low complexity" evidence="2">
    <location>
        <begin position="696"/>
        <end position="708"/>
    </location>
</feature>